<gene>
    <name evidence="1" type="primary">metN2</name>
    <name type="ordered locus">MW0790</name>
</gene>
<name>METN2_STAAW</name>
<evidence type="ECO:0000255" key="1">
    <source>
        <dbReference type="HAMAP-Rule" id="MF_01719"/>
    </source>
</evidence>
<proteinExistence type="inferred from homology"/>
<sequence>MIELKEVVKEYRTKNKEVLAVDHVNLSIRAGSIYGVIGFSGAGKSTLIRMFNHLEAPTSGEVIIDGDHIGQLSKNGLRAKRQKVSMIFQHFNLLWSRTVLKNIMFPLEIAGVPRRRAKQKALELVELVGLKGREKAYPSELSGGQKQRVGIARALANDPTVLLCDEATSALDPQTTDEILDLLLKIREQQNLTIVLITHEMHVIRRICDEVAVMESGKVIEQGPVTQVFENPQHTVTKRFVKDDLNDDFETSLTELEPLEKDAYIVRLVFAGSTTTEPIVSSLSTAYDIKINILEANIKNTKNGTVGFLVLHIPYISSVDFGKFEKELIERQVKMEVLRHG</sequence>
<accession>Q8NXH5</accession>
<comment type="function">
    <text evidence="1">Part of the ABC transporter complex MetNIQ involved in methionine import. Responsible for energy coupling to the transport system.</text>
</comment>
<comment type="catalytic activity">
    <reaction evidence="1">
        <text>L-methionine(out) + ATP + H2O = L-methionine(in) + ADP + phosphate + H(+)</text>
        <dbReference type="Rhea" id="RHEA:29779"/>
        <dbReference type="ChEBI" id="CHEBI:15377"/>
        <dbReference type="ChEBI" id="CHEBI:15378"/>
        <dbReference type="ChEBI" id="CHEBI:30616"/>
        <dbReference type="ChEBI" id="CHEBI:43474"/>
        <dbReference type="ChEBI" id="CHEBI:57844"/>
        <dbReference type="ChEBI" id="CHEBI:456216"/>
        <dbReference type="EC" id="7.4.2.11"/>
    </reaction>
</comment>
<comment type="catalytic activity">
    <reaction evidence="1">
        <text>D-methionine(out) + ATP + H2O = D-methionine(in) + ADP + phosphate + H(+)</text>
        <dbReference type="Rhea" id="RHEA:29767"/>
        <dbReference type="ChEBI" id="CHEBI:15377"/>
        <dbReference type="ChEBI" id="CHEBI:15378"/>
        <dbReference type="ChEBI" id="CHEBI:30616"/>
        <dbReference type="ChEBI" id="CHEBI:43474"/>
        <dbReference type="ChEBI" id="CHEBI:57932"/>
        <dbReference type="ChEBI" id="CHEBI:456216"/>
        <dbReference type="EC" id="7.4.2.11"/>
    </reaction>
</comment>
<comment type="subunit">
    <text evidence="1">The complex is composed of two ATP-binding proteins (MetN), two transmembrane proteins (MetI) and a solute-binding protein (MetQ).</text>
</comment>
<comment type="subcellular location">
    <subcellularLocation>
        <location evidence="1">Cell membrane</location>
        <topology evidence="1">Peripheral membrane protein</topology>
    </subcellularLocation>
</comment>
<comment type="similarity">
    <text evidence="1">Belongs to the ABC transporter superfamily. Methionine importer (TC 3.A.1.24) family.</text>
</comment>
<keyword id="KW-0029">Amino-acid transport</keyword>
<keyword id="KW-0067">ATP-binding</keyword>
<keyword id="KW-1003">Cell membrane</keyword>
<keyword id="KW-0472">Membrane</keyword>
<keyword id="KW-0547">Nucleotide-binding</keyword>
<keyword id="KW-1278">Translocase</keyword>
<keyword id="KW-0813">Transport</keyword>
<protein>
    <recommendedName>
        <fullName evidence="1">Methionine import ATP-binding protein MetN 2</fullName>
        <ecNumber evidence="1">7.4.2.11</ecNumber>
    </recommendedName>
</protein>
<feature type="chain" id="PRO_0000270398" description="Methionine import ATP-binding protein MetN 2">
    <location>
        <begin position="1"/>
        <end position="341"/>
    </location>
</feature>
<feature type="domain" description="ABC transporter" evidence="1">
    <location>
        <begin position="2"/>
        <end position="241"/>
    </location>
</feature>
<feature type="binding site" evidence="1">
    <location>
        <begin position="38"/>
        <end position="45"/>
    </location>
    <ligand>
        <name>ATP</name>
        <dbReference type="ChEBI" id="CHEBI:30616"/>
    </ligand>
</feature>
<organism>
    <name type="scientific">Staphylococcus aureus (strain MW2)</name>
    <dbReference type="NCBI Taxonomy" id="196620"/>
    <lineage>
        <taxon>Bacteria</taxon>
        <taxon>Bacillati</taxon>
        <taxon>Bacillota</taxon>
        <taxon>Bacilli</taxon>
        <taxon>Bacillales</taxon>
        <taxon>Staphylococcaceae</taxon>
        <taxon>Staphylococcus</taxon>
    </lineage>
</organism>
<dbReference type="EC" id="7.4.2.11" evidence="1"/>
<dbReference type="EMBL" id="BA000033">
    <property type="protein sequence ID" value="BAB94655.1"/>
    <property type="molecule type" value="Genomic_DNA"/>
</dbReference>
<dbReference type="RefSeq" id="WP_000571218.1">
    <property type="nucleotide sequence ID" value="NC_003923.1"/>
</dbReference>
<dbReference type="SMR" id="Q8NXH5"/>
<dbReference type="KEGG" id="sam:MW0790"/>
<dbReference type="HOGENOM" id="CLU_000604_1_3_9"/>
<dbReference type="GO" id="GO:0005886">
    <property type="term" value="C:plasma membrane"/>
    <property type="evidence" value="ECO:0007669"/>
    <property type="project" value="UniProtKB-SubCell"/>
</dbReference>
<dbReference type="GO" id="GO:0033232">
    <property type="term" value="F:ABC-type D-methionine transporter activity"/>
    <property type="evidence" value="ECO:0007669"/>
    <property type="project" value="UniProtKB-EC"/>
</dbReference>
<dbReference type="GO" id="GO:0005524">
    <property type="term" value="F:ATP binding"/>
    <property type="evidence" value="ECO:0007669"/>
    <property type="project" value="UniProtKB-KW"/>
</dbReference>
<dbReference type="GO" id="GO:0016887">
    <property type="term" value="F:ATP hydrolysis activity"/>
    <property type="evidence" value="ECO:0007669"/>
    <property type="project" value="InterPro"/>
</dbReference>
<dbReference type="CDD" id="cd03258">
    <property type="entry name" value="ABC_MetN_methionine_transporter"/>
    <property type="match status" value="1"/>
</dbReference>
<dbReference type="FunFam" id="3.40.50.300:FF:000056">
    <property type="entry name" value="Cell division ATP-binding protein FtsE"/>
    <property type="match status" value="1"/>
</dbReference>
<dbReference type="Gene3D" id="3.30.70.260">
    <property type="match status" value="1"/>
</dbReference>
<dbReference type="Gene3D" id="3.40.50.300">
    <property type="entry name" value="P-loop containing nucleotide triphosphate hydrolases"/>
    <property type="match status" value="1"/>
</dbReference>
<dbReference type="InterPro" id="IPR003593">
    <property type="entry name" value="AAA+_ATPase"/>
</dbReference>
<dbReference type="InterPro" id="IPR003439">
    <property type="entry name" value="ABC_transporter-like_ATP-bd"/>
</dbReference>
<dbReference type="InterPro" id="IPR017871">
    <property type="entry name" value="ABC_transporter-like_CS"/>
</dbReference>
<dbReference type="InterPro" id="IPR045865">
    <property type="entry name" value="ACT-like_dom_sf"/>
</dbReference>
<dbReference type="InterPro" id="IPR041701">
    <property type="entry name" value="MetN_ABC"/>
</dbReference>
<dbReference type="InterPro" id="IPR050086">
    <property type="entry name" value="MetN_ABC_transporter-like"/>
</dbReference>
<dbReference type="InterPro" id="IPR018449">
    <property type="entry name" value="NIL_domain"/>
</dbReference>
<dbReference type="InterPro" id="IPR027417">
    <property type="entry name" value="P-loop_NTPase"/>
</dbReference>
<dbReference type="PANTHER" id="PTHR43166">
    <property type="entry name" value="AMINO ACID IMPORT ATP-BINDING PROTEIN"/>
    <property type="match status" value="1"/>
</dbReference>
<dbReference type="PANTHER" id="PTHR43166:SF36">
    <property type="entry name" value="METHIONINE IMPORT ATP-BINDING PROTEIN METN 2"/>
    <property type="match status" value="1"/>
</dbReference>
<dbReference type="Pfam" id="PF00005">
    <property type="entry name" value="ABC_tran"/>
    <property type="match status" value="1"/>
</dbReference>
<dbReference type="Pfam" id="PF09383">
    <property type="entry name" value="NIL"/>
    <property type="match status" value="1"/>
</dbReference>
<dbReference type="SMART" id="SM00382">
    <property type="entry name" value="AAA"/>
    <property type="match status" value="1"/>
</dbReference>
<dbReference type="SMART" id="SM00930">
    <property type="entry name" value="NIL"/>
    <property type="match status" value="1"/>
</dbReference>
<dbReference type="SUPFAM" id="SSF55021">
    <property type="entry name" value="ACT-like"/>
    <property type="match status" value="1"/>
</dbReference>
<dbReference type="SUPFAM" id="SSF52540">
    <property type="entry name" value="P-loop containing nucleoside triphosphate hydrolases"/>
    <property type="match status" value="1"/>
</dbReference>
<dbReference type="PROSITE" id="PS00211">
    <property type="entry name" value="ABC_TRANSPORTER_1"/>
    <property type="match status" value="1"/>
</dbReference>
<dbReference type="PROSITE" id="PS50893">
    <property type="entry name" value="ABC_TRANSPORTER_2"/>
    <property type="match status" value="1"/>
</dbReference>
<dbReference type="PROSITE" id="PS51264">
    <property type="entry name" value="METN"/>
    <property type="match status" value="1"/>
</dbReference>
<reference key="1">
    <citation type="journal article" date="2002" name="Lancet">
        <title>Genome and virulence determinants of high virulence community-acquired MRSA.</title>
        <authorList>
            <person name="Baba T."/>
            <person name="Takeuchi F."/>
            <person name="Kuroda M."/>
            <person name="Yuzawa H."/>
            <person name="Aoki K."/>
            <person name="Oguchi A."/>
            <person name="Nagai Y."/>
            <person name="Iwama N."/>
            <person name="Asano K."/>
            <person name="Naimi T."/>
            <person name="Kuroda H."/>
            <person name="Cui L."/>
            <person name="Yamamoto K."/>
            <person name="Hiramatsu K."/>
        </authorList>
    </citation>
    <scope>NUCLEOTIDE SEQUENCE [LARGE SCALE GENOMIC DNA]</scope>
    <source>
        <strain>MW2</strain>
    </source>
</reference>